<reference key="1">
    <citation type="journal article" date="2007" name="DNA Res.">
        <title>Complete genomic structure of the bloom-forming toxic cyanobacterium Microcystis aeruginosa NIES-843.</title>
        <authorList>
            <person name="Kaneko T."/>
            <person name="Nakajima N."/>
            <person name="Okamoto S."/>
            <person name="Suzuki I."/>
            <person name="Tanabe Y."/>
            <person name="Tamaoki M."/>
            <person name="Nakamura Y."/>
            <person name="Kasai F."/>
            <person name="Watanabe A."/>
            <person name="Kawashima K."/>
            <person name="Kishida Y."/>
            <person name="Ono A."/>
            <person name="Shimizu Y."/>
            <person name="Takahashi C."/>
            <person name="Minami C."/>
            <person name="Fujishiro T."/>
            <person name="Kohara M."/>
            <person name="Katoh M."/>
            <person name="Nakazaki N."/>
            <person name="Nakayama S."/>
            <person name="Yamada M."/>
            <person name="Tabata S."/>
            <person name="Watanabe M.M."/>
        </authorList>
    </citation>
    <scope>NUCLEOTIDE SEQUENCE [LARGE SCALE GENOMIC DNA]</scope>
    <source>
        <strain>NIES-843 / IAM M-247</strain>
    </source>
</reference>
<sequence length="329" mass="37181">MNQIDYLRISLIDRCNFRCQYCLPEDAELAYVRPQDLLTREEILTLVKNVFIPLGFRKFRLTGGEPLLHPEVVEIVRDIASLSATSDLALTTNGYLLDNLAEMLYEAGLRRINISLDSLDPDTFDKIIGNRGRSRWQKTWAGIQAAQRVGFDPLKLNVVVIPGINEAEVEDLAALTIEKRWHVRFIEFMPIGNGDLFQEKAWIANEELRGRIRAKWGLNEGQVRGNGPADVFQIPGAKGTIGFISQMSECFCDRCNRLRLSADGWLRPCLLNETGQIDLKTALRQGISPAEIRERVRELIELKAEINFKLRDSGTSSGIYTRTMSQIGG</sequence>
<organism>
    <name type="scientific">Microcystis aeruginosa (strain NIES-843 / IAM M-2473)</name>
    <dbReference type="NCBI Taxonomy" id="449447"/>
    <lineage>
        <taxon>Bacteria</taxon>
        <taxon>Bacillati</taxon>
        <taxon>Cyanobacteriota</taxon>
        <taxon>Cyanophyceae</taxon>
        <taxon>Oscillatoriophycideae</taxon>
        <taxon>Chroococcales</taxon>
        <taxon>Microcystaceae</taxon>
        <taxon>Microcystis</taxon>
    </lineage>
</organism>
<protein>
    <recommendedName>
        <fullName evidence="1">GTP 3',8-cyclase</fullName>
        <ecNumber evidence="1">4.1.99.22</ecNumber>
    </recommendedName>
    <alternativeName>
        <fullName evidence="1">Molybdenum cofactor biosynthesis protein A</fullName>
    </alternativeName>
</protein>
<dbReference type="EC" id="4.1.99.22" evidence="1"/>
<dbReference type="EMBL" id="AP009552">
    <property type="protein sequence ID" value="BAG00286.1"/>
    <property type="molecule type" value="Genomic_DNA"/>
</dbReference>
<dbReference type="RefSeq" id="WP_012264115.1">
    <property type="nucleotide sequence ID" value="NC_010296.1"/>
</dbReference>
<dbReference type="SMR" id="B0JNC2"/>
<dbReference type="STRING" id="449447.MAE_04640"/>
<dbReference type="PaxDb" id="449447-MAE_04640"/>
<dbReference type="EnsemblBacteria" id="BAG00286">
    <property type="protein sequence ID" value="BAG00286"/>
    <property type="gene ID" value="MAE_04640"/>
</dbReference>
<dbReference type="KEGG" id="mar:MAE_04640"/>
<dbReference type="PATRIC" id="fig|449447.4.peg.437"/>
<dbReference type="eggNOG" id="COG2896">
    <property type="taxonomic scope" value="Bacteria"/>
</dbReference>
<dbReference type="HOGENOM" id="CLU_009273_0_1_3"/>
<dbReference type="BioCyc" id="MAER449447:MAE_RS02140-MONOMER"/>
<dbReference type="UniPathway" id="UPA00344"/>
<dbReference type="Proteomes" id="UP000001510">
    <property type="component" value="Chromosome"/>
</dbReference>
<dbReference type="GO" id="GO:0051539">
    <property type="term" value="F:4 iron, 4 sulfur cluster binding"/>
    <property type="evidence" value="ECO:0007669"/>
    <property type="project" value="UniProtKB-UniRule"/>
</dbReference>
<dbReference type="GO" id="GO:0061799">
    <property type="term" value="F:cyclic pyranopterin monophosphate synthase activity"/>
    <property type="evidence" value="ECO:0007669"/>
    <property type="project" value="TreeGrafter"/>
</dbReference>
<dbReference type="GO" id="GO:0061798">
    <property type="term" value="F:GTP 3',8'-cyclase activity"/>
    <property type="evidence" value="ECO:0007669"/>
    <property type="project" value="UniProtKB-UniRule"/>
</dbReference>
<dbReference type="GO" id="GO:0005525">
    <property type="term" value="F:GTP binding"/>
    <property type="evidence" value="ECO:0007669"/>
    <property type="project" value="UniProtKB-UniRule"/>
</dbReference>
<dbReference type="GO" id="GO:0046872">
    <property type="term" value="F:metal ion binding"/>
    <property type="evidence" value="ECO:0007669"/>
    <property type="project" value="UniProtKB-KW"/>
</dbReference>
<dbReference type="GO" id="GO:1904047">
    <property type="term" value="F:S-adenosyl-L-methionine binding"/>
    <property type="evidence" value="ECO:0007669"/>
    <property type="project" value="UniProtKB-UniRule"/>
</dbReference>
<dbReference type="GO" id="GO:0006777">
    <property type="term" value="P:Mo-molybdopterin cofactor biosynthetic process"/>
    <property type="evidence" value="ECO:0007669"/>
    <property type="project" value="UniProtKB-UniRule"/>
</dbReference>
<dbReference type="CDD" id="cd01335">
    <property type="entry name" value="Radical_SAM"/>
    <property type="match status" value="1"/>
</dbReference>
<dbReference type="CDD" id="cd21117">
    <property type="entry name" value="Twitch_MoaA"/>
    <property type="match status" value="1"/>
</dbReference>
<dbReference type="Gene3D" id="3.20.20.70">
    <property type="entry name" value="Aldolase class I"/>
    <property type="match status" value="1"/>
</dbReference>
<dbReference type="HAMAP" id="MF_01225_B">
    <property type="entry name" value="MoaA_B"/>
    <property type="match status" value="1"/>
</dbReference>
<dbReference type="InterPro" id="IPR013785">
    <property type="entry name" value="Aldolase_TIM"/>
</dbReference>
<dbReference type="InterPro" id="IPR006638">
    <property type="entry name" value="Elp3/MiaA/NifB-like_rSAM"/>
</dbReference>
<dbReference type="InterPro" id="IPR013483">
    <property type="entry name" value="MoaA"/>
</dbReference>
<dbReference type="InterPro" id="IPR000385">
    <property type="entry name" value="MoaA_NifB_PqqE_Fe-S-bd_CS"/>
</dbReference>
<dbReference type="InterPro" id="IPR010505">
    <property type="entry name" value="MoaA_twitch"/>
</dbReference>
<dbReference type="InterPro" id="IPR050105">
    <property type="entry name" value="MoCo_biosynth_MoaA/MoaC"/>
</dbReference>
<dbReference type="InterPro" id="IPR007197">
    <property type="entry name" value="rSAM"/>
</dbReference>
<dbReference type="NCBIfam" id="TIGR02666">
    <property type="entry name" value="moaA"/>
    <property type="match status" value="1"/>
</dbReference>
<dbReference type="PANTHER" id="PTHR22960:SF0">
    <property type="entry name" value="MOLYBDENUM COFACTOR BIOSYNTHESIS PROTEIN 1"/>
    <property type="match status" value="1"/>
</dbReference>
<dbReference type="PANTHER" id="PTHR22960">
    <property type="entry name" value="MOLYBDOPTERIN COFACTOR SYNTHESIS PROTEIN A"/>
    <property type="match status" value="1"/>
</dbReference>
<dbReference type="Pfam" id="PF13353">
    <property type="entry name" value="Fer4_12"/>
    <property type="match status" value="1"/>
</dbReference>
<dbReference type="Pfam" id="PF06463">
    <property type="entry name" value="Mob_synth_C"/>
    <property type="match status" value="1"/>
</dbReference>
<dbReference type="Pfam" id="PF04055">
    <property type="entry name" value="Radical_SAM"/>
    <property type="match status" value="1"/>
</dbReference>
<dbReference type="SFLD" id="SFLDG01383">
    <property type="entry name" value="cyclic_pyranopterin_phosphate"/>
    <property type="match status" value="1"/>
</dbReference>
<dbReference type="SFLD" id="SFLDG01386">
    <property type="entry name" value="main_SPASM_domain-containing"/>
    <property type="match status" value="1"/>
</dbReference>
<dbReference type="SMART" id="SM00729">
    <property type="entry name" value="Elp3"/>
    <property type="match status" value="1"/>
</dbReference>
<dbReference type="SUPFAM" id="SSF102114">
    <property type="entry name" value="Radical SAM enzymes"/>
    <property type="match status" value="1"/>
</dbReference>
<dbReference type="PROSITE" id="PS01305">
    <property type="entry name" value="MOAA_NIFB_PQQE"/>
    <property type="match status" value="1"/>
</dbReference>
<dbReference type="PROSITE" id="PS51918">
    <property type="entry name" value="RADICAL_SAM"/>
    <property type="match status" value="1"/>
</dbReference>
<proteinExistence type="inferred from homology"/>
<gene>
    <name evidence="1" type="primary">moaA</name>
    <name type="ordered locus">MAE_04640</name>
</gene>
<comment type="function">
    <text evidence="1">Catalyzes the cyclization of GTP to (8S)-3',8-cyclo-7,8-dihydroguanosine 5'-triphosphate.</text>
</comment>
<comment type="catalytic activity">
    <reaction evidence="1">
        <text>GTP + AH2 + S-adenosyl-L-methionine = (8S)-3',8-cyclo-7,8-dihydroguanosine 5'-triphosphate + 5'-deoxyadenosine + L-methionine + A + H(+)</text>
        <dbReference type="Rhea" id="RHEA:49576"/>
        <dbReference type="ChEBI" id="CHEBI:13193"/>
        <dbReference type="ChEBI" id="CHEBI:15378"/>
        <dbReference type="ChEBI" id="CHEBI:17319"/>
        <dbReference type="ChEBI" id="CHEBI:17499"/>
        <dbReference type="ChEBI" id="CHEBI:37565"/>
        <dbReference type="ChEBI" id="CHEBI:57844"/>
        <dbReference type="ChEBI" id="CHEBI:59789"/>
        <dbReference type="ChEBI" id="CHEBI:131766"/>
        <dbReference type="EC" id="4.1.99.22"/>
    </reaction>
</comment>
<comment type="cofactor">
    <cofactor evidence="1">
        <name>[4Fe-4S] cluster</name>
        <dbReference type="ChEBI" id="CHEBI:49883"/>
    </cofactor>
    <text evidence="1">Binds 2 [4Fe-4S] clusters. Binds 1 [4Fe-4S] cluster coordinated with 3 cysteines and an exchangeable S-adenosyl-L-methionine and 1 [4Fe-4S] cluster coordinated with 3 cysteines and the GTP-derived substrate.</text>
</comment>
<comment type="pathway">
    <text evidence="1">Cofactor biosynthesis; molybdopterin biosynthesis.</text>
</comment>
<comment type="subunit">
    <text evidence="1">Monomer and homodimer.</text>
</comment>
<comment type="similarity">
    <text evidence="1">Belongs to the radical SAM superfamily. MoaA family.</text>
</comment>
<accession>B0JNC2</accession>
<evidence type="ECO:0000255" key="1">
    <source>
        <dbReference type="HAMAP-Rule" id="MF_01225"/>
    </source>
</evidence>
<evidence type="ECO:0000255" key="2">
    <source>
        <dbReference type="PROSITE-ProRule" id="PRU01266"/>
    </source>
</evidence>
<feature type="chain" id="PRO_1000085702" description="GTP 3',8-cyclase">
    <location>
        <begin position="1"/>
        <end position="329"/>
    </location>
</feature>
<feature type="domain" description="Radical SAM core" evidence="2">
    <location>
        <begin position="1"/>
        <end position="229"/>
    </location>
</feature>
<feature type="binding site" evidence="1">
    <location>
        <position position="8"/>
    </location>
    <ligand>
        <name>GTP</name>
        <dbReference type="ChEBI" id="CHEBI:37565"/>
    </ligand>
</feature>
<feature type="binding site" evidence="1">
    <location>
        <position position="15"/>
    </location>
    <ligand>
        <name>[4Fe-4S] cluster</name>
        <dbReference type="ChEBI" id="CHEBI:49883"/>
        <label>1</label>
        <note>4Fe-4S-S-AdoMet</note>
    </ligand>
</feature>
<feature type="binding site" evidence="1">
    <location>
        <position position="19"/>
    </location>
    <ligand>
        <name>[4Fe-4S] cluster</name>
        <dbReference type="ChEBI" id="CHEBI:49883"/>
        <label>1</label>
        <note>4Fe-4S-S-AdoMet</note>
    </ligand>
</feature>
<feature type="binding site" evidence="1">
    <location>
        <position position="21"/>
    </location>
    <ligand>
        <name>S-adenosyl-L-methionine</name>
        <dbReference type="ChEBI" id="CHEBI:59789"/>
    </ligand>
</feature>
<feature type="binding site" evidence="1">
    <location>
        <position position="22"/>
    </location>
    <ligand>
        <name>[4Fe-4S] cluster</name>
        <dbReference type="ChEBI" id="CHEBI:49883"/>
        <label>1</label>
        <note>4Fe-4S-S-AdoMet</note>
    </ligand>
</feature>
<feature type="binding site" evidence="1">
    <location>
        <position position="60"/>
    </location>
    <ligand>
        <name>GTP</name>
        <dbReference type="ChEBI" id="CHEBI:37565"/>
    </ligand>
</feature>
<feature type="binding site" evidence="1">
    <location>
        <position position="64"/>
    </location>
    <ligand>
        <name>S-adenosyl-L-methionine</name>
        <dbReference type="ChEBI" id="CHEBI:59789"/>
    </ligand>
</feature>
<feature type="binding site" evidence="1">
    <location>
        <position position="91"/>
    </location>
    <ligand>
        <name>GTP</name>
        <dbReference type="ChEBI" id="CHEBI:37565"/>
    </ligand>
</feature>
<feature type="binding site" evidence="1">
    <location>
        <position position="115"/>
    </location>
    <ligand>
        <name>S-adenosyl-L-methionine</name>
        <dbReference type="ChEBI" id="CHEBI:59789"/>
    </ligand>
</feature>
<feature type="binding site" evidence="1">
    <location>
        <position position="155"/>
    </location>
    <ligand>
        <name>GTP</name>
        <dbReference type="ChEBI" id="CHEBI:37565"/>
    </ligand>
</feature>
<feature type="binding site" evidence="1">
    <location>
        <position position="189"/>
    </location>
    <ligand>
        <name>S-adenosyl-L-methionine</name>
        <dbReference type="ChEBI" id="CHEBI:59789"/>
    </ligand>
</feature>
<feature type="binding site" evidence="1">
    <location>
        <position position="252"/>
    </location>
    <ligand>
        <name>[4Fe-4S] cluster</name>
        <dbReference type="ChEBI" id="CHEBI:49883"/>
        <label>2</label>
        <note>4Fe-4S-substrate</note>
    </ligand>
</feature>
<feature type="binding site" evidence="1">
    <location>
        <position position="255"/>
    </location>
    <ligand>
        <name>[4Fe-4S] cluster</name>
        <dbReference type="ChEBI" id="CHEBI:49883"/>
        <label>2</label>
        <note>4Fe-4S-substrate</note>
    </ligand>
</feature>
<feature type="binding site" evidence="1">
    <location>
        <begin position="257"/>
        <end position="259"/>
    </location>
    <ligand>
        <name>GTP</name>
        <dbReference type="ChEBI" id="CHEBI:37565"/>
    </ligand>
</feature>
<feature type="binding site" evidence="1">
    <location>
        <position position="269"/>
    </location>
    <ligand>
        <name>[4Fe-4S] cluster</name>
        <dbReference type="ChEBI" id="CHEBI:49883"/>
        <label>2</label>
        <note>4Fe-4S-substrate</note>
    </ligand>
</feature>
<keyword id="KW-0004">4Fe-4S</keyword>
<keyword id="KW-0342">GTP-binding</keyword>
<keyword id="KW-0408">Iron</keyword>
<keyword id="KW-0411">Iron-sulfur</keyword>
<keyword id="KW-0456">Lyase</keyword>
<keyword id="KW-0479">Metal-binding</keyword>
<keyword id="KW-0501">Molybdenum cofactor biosynthesis</keyword>
<keyword id="KW-0547">Nucleotide-binding</keyword>
<keyword id="KW-0949">S-adenosyl-L-methionine</keyword>
<name>MOAA_MICAN</name>